<dbReference type="EC" id="2.7.2.3"/>
<dbReference type="EMBL" id="M55530">
    <property type="protein sequence ID" value="AAA72937.1"/>
    <property type="molecule type" value="Genomic_DNA"/>
</dbReference>
<dbReference type="PIR" id="PN0007">
    <property type="entry name" value="PN0007"/>
</dbReference>
<dbReference type="SMR" id="P20972"/>
<dbReference type="UniPathway" id="UPA00109">
    <property type="reaction ID" value="UER00185"/>
</dbReference>
<dbReference type="GO" id="GO:0005829">
    <property type="term" value="C:cytosol"/>
    <property type="evidence" value="ECO:0007669"/>
    <property type="project" value="TreeGrafter"/>
</dbReference>
<dbReference type="GO" id="GO:0043531">
    <property type="term" value="F:ADP binding"/>
    <property type="evidence" value="ECO:0007669"/>
    <property type="project" value="TreeGrafter"/>
</dbReference>
<dbReference type="GO" id="GO:0005524">
    <property type="term" value="F:ATP binding"/>
    <property type="evidence" value="ECO:0007669"/>
    <property type="project" value="UniProtKB-KW"/>
</dbReference>
<dbReference type="GO" id="GO:0004618">
    <property type="term" value="F:phosphoglycerate kinase activity"/>
    <property type="evidence" value="ECO:0007669"/>
    <property type="project" value="UniProtKB-EC"/>
</dbReference>
<dbReference type="GO" id="GO:0006094">
    <property type="term" value="P:gluconeogenesis"/>
    <property type="evidence" value="ECO:0007669"/>
    <property type="project" value="TreeGrafter"/>
</dbReference>
<dbReference type="GO" id="GO:0006096">
    <property type="term" value="P:glycolytic process"/>
    <property type="evidence" value="ECO:0007669"/>
    <property type="project" value="UniProtKB-UniPathway"/>
</dbReference>
<dbReference type="CDD" id="cd00318">
    <property type="entry name" value="Phosphoglycerate_kinase"/>
    <property type="match status" value="1"/>
</dbReference>
<dbReference type="FunFam" id="3.40.50.1260:FF:000006">
    <property type="entry name" value="Phosphoglycerate kinase"/>
    <property type="match status" value="1"/>
</dbReference>
<dbReference type="FunFam" id="3.40.50.1260:FF:000012">
    <property type="entry name" value="Phosphoglycerate kinase"/>
    <property type="match status" value="1"/>
</dbReference>
<dbReference type="Gene3D" id="3.40.50.1260">
    <property type="entry name" value="Phosphoglycerate kinase, N-terminal domain"/>
    <property type="match status" value="2"/>
</dbReference>
<dbReference type="HAMAP" id="MF_00145">
    <property type="entry name" value="Phosphoglyc_kinase"/>
    <property type="match status" value="1"/>
</dbReference>
<dbReference type="InterPro" id="IPR001576">
    <property type="entry name" value="Phosphoglycerate_kinase"/>
</dbReference>
<dbReference type="InterPro" id="IPR015911">
    <property type="entry name" value="Phosphoglycerate_kinase_CS"/>
</dbReference>
<dbReference type="InterPro" id="IPR015824">
    <property type="entry name" value="Phosphoglycerate_kinase_N"/>
</dbReference>
<dbReference type="InterPro" id="IPR036043">
    <property type="entry name" value="Phosphoglycerate_kinase_sf"/>
</dbReference>
<dbReference type="PANTHER" id="PTHR11406">
    <property type="entry name" value="PHOSPHOGLYCERATE KINASE"/>
    <property type="match status" value="1"/>
</dbReference>
<dbReference type="PANTHER" id="PTHR11406:SF23">
    <property type="entry name" value="PHOSPHOGLYCERATE KINASE 1, CHLOROPLASTIC-RELATED"/>
    <property type="match status" value="1"/>
</dbReference>
<dbReference type="Pfam" id="PF00162">
    <property type="entry name" value="PGK"/>
    <property type="match status" value="1"/>
</dbReference>
<dbReference type="PIRSF" id="PIRSF000724">
    <property type="entry name" value="Pgk"/>
    <property type="match status" value="1"/>
</dbReference>
<dbReference type="PRINTS" id="PR00477">
    <property type="entry name" value="PHGLYCKINASE"/>
</dbReference>
<dbReference type="SUPFAM" id="SSF53748">
    <property type="entry name" value="Phosphoglycerate kinase"/>
    <property type="match status" value="1"/>
</dbReference>
<dbReference type="PROSITE" id="PS00111">
    <property type="entry name" value="PGLYCERATE_KINASE"/>
    <property type="match status" value="1"/>
</dbReference>
<name>PGK_METBR</name>
<keyword id="KW-0067">ATP-binding</keyword>
<keyword id="KW-0963">Cytoplasm</keyword>
<keyword id="KW-0324">Glycolysis</keyword>
<keyword id="KW-0418">Kinase</keyword>
<keyword id="KW-0547">Nucleotide-binding</keyword>
<keyword id="KW-0808">Transferase</keyword>
<evidence type="ECO:0000250" key="1"/>
<evidence type="ECO:0000305" key="2"/>
<gene>
    <name type="primary">pgk</name>
</gene>
<reference key="1">
    <citation type="journal article" date="1990" name="Gene">
        <title>Cloning and sequencing the gene encoding 3-phosphoglycerate kinase from mesophilic Methanobacterium bryantii and thermophilic Methanothermus fervidus.</title>
        <authorList>
            <person name="Fabry S."/>
            <person name="Heppner P."/>
            <person name="Dietmaier W."/>
            <person name="Hensel R."/>
        </authorList>
    </citation>
    <scope>NUCLEOTIDE SEQUENCE [GENOMIC DNA]</scope>
</reference>
<proteinExistence type="inferred from homology"/>
<sequence length="409" mass="44793">MSLPFYTIDDFNLEDKTVLVRVDINSPVDPSTGSILDDTKIKLHAETIDEISKKGAKTVVLAHQSRPGKKDFTTLQQHAKALSNILNRPVDYIDDIFGTAAREEIKRLKKGDILLLENVRFYPEEILKRDPHQQAETHMVRKLYPIIDIFINDAFAAAHRSQPSLVGFAVKLPSGAGRIMEKELKSLYGAVDNAEKPCVYVLGGVKVDDSIMVLENVLRNGSADYVLTTGLVANIFLWASGINLGKYNEDFIINKGYIDFVEKGKQLLEEFDGQIKMPDDVAVCVDNARVEYCTKNIPNKPIYDIGTNTITEYAKFIRDAKTIFANGPAGVFEQEGFSIGTEDILNTIASSNGYSIIGGGHLAAAANQMGLSSGITHISSGGGASINLLAGEKLPVVEILTEVKMKGRK</sequence>
<organism>
    <name type="scientific">Methanobacterium bryantii</name>
    <dbReference type="NCBI Taxonomy" id="2161"/>
    <lineage>
        <taxon>Archaea</taxon>
        <taxon>Methanobacteriati</taxon>
        <taxon>Methanobacteriota</taxon>
        <taxon>Methanomada group</taxon>
        <taxon>Methanobacteria</taxon>
        <taxon>Methanobacteriales</taxon>
        <taxon>Methanobacteriaceae</taxon>
        <taxon>Methanobacterium</taxon>
    </lineage>
</organism>
<feature type="chain" id="PRO_0000146056" description="Phosphoglycerate kinase">
    <location>
        <begin position="1"/>
        <end position="409" status="greater than"/>
    </location>
</feature>
<feature type="binding site" evidence="1">
    <location>
        <begin position="23"/>
        <end position="25"/>
    </location>
    <ligand>
        <name>substrate</name>
    </ligand>
</feature>
<feature type="binding site" evidence="1">
    <location>
        <begin position="63"/>
        <end position="66"/>
    </location>
    <ligand>
        <name>substrate</name>
    </ligand>
</feature>
<feature type="binding site" evidence="1">
    <location>
        <position position="120"/>
    </location>
    <ligand>
        <name>substrate</name>
    </ligand>
</feature>
<feature type="binding site" evidence="1">
    <location>
        <position position="160"/>
    </location>
    <ligand>
        <name>substrate</name>
    </ligand>
</feature>
<feature type="binding site" evidence="1">
    <location>
        <position position="333"/>
    </location>
    <ligand>
        <name>ATP</name>
        <dbReference type="ChEBI" id="CHEBI:30616"/>
    </ligand>
</feature>
<feature type="binding site" evidence="1">
    <location>
        <begin position="359"/>
        <end position="362"/>
    </location>
    <ligand>
        <name>ATP</name>
        <dbReference type="ChEBI" id="CHEBI:30616"/>
    </ligand>
</feature>
<feature type="non-terminal residue">
    <location>
        <position position="409"/>
    </location>
</feature>
<comment type="catalytic activity">
    <reaction>
        <text>(2R)-3-phosphoglycerate + ATP = (2R)-3-phospho-glyceroyl phosphate + ADP</text>
        <dbReference type="Rhea" id="RHEA:14801"/>
        <dbReference type="ChEBI" id="CHEBI:30616"/>
        <dbReference type="ChEBI" id="CHEBI:57604"/>
        <dbReference type="ChEBI" id="CHEBI:58272"/>
        <dbReference type="ChEBI" id="CHEBI:456216"/>
        <dbReference type="EC" id="2.7.2.3"/>
    </reaction>
</comment>
<comment type="pathway">
    <text>Carbohydrate degradation; glycolysis; pyruvate from D-glyceraldehyde 3-phosphate: step 2/5.</text>
</comment>
<comment type="subunit">
    <text>Monomer.</text>
</comment>
<comment type="subcellular location">
    <subcellularLocation>
        <location>Cytoplasm</location>
    </subcellularLocation>
</comment>
<comment type="similarity">
    <text evidence="2">Belongs to the phosphoglycerate kinase family.</text>
</comment>
<accession>P20972</accession>
<protein>
    <recommendedName>
        <fullName>Phosphoglycerate kinase</fullName>
        <ecNumber>2.7.2.3</ecNumber>
    </recommendedName>
</protein>